<sequence>MVKRTGNGTDAIDGSRKRGRKDLRSIRRARNDKEPVEEPEIPVASEEDGELSEDSEEDATNEVQEQEDSKEKAYGALLTILKSEHPEDRQRERRKKKQDLQDPSSSDDELSEDEKGEVEANLVDTPGEEEPQSEEELSEGDEDESEDERDPFESHFNMQSESIDSLDEAWKQKKIVNKSGKIRVDDDESLIYTKTLAGKGQEFELPSHKGHLSSYPLKRKLKIQNNLLESQDDVLTPLQRKIVDPIFQYRDLLYEYEDYEQDEDEYRDLYVLHVLNHIYKTRDRILKDNQRLATNPDGEFLDQGFTRPKVLIVAPTRDTAYQIVSKVIEKSGLDQVDKKSKLRDQFFEDVLPPSSKPKSFRHTFKGNTNDFFVLGVKFTRKAIRLYSNFYQSDLIVCSPLGLQLILENTDRKKRQDDFLSSIELMIIDQLNSIEFQNVSHLFTIFAHMNKIPKEQHDTDFGRVRMWYINEQAKLLRQTLIFTRYVTPTANFLLNGKCRNIGGRWKNHHQITGEQSSVSKLGFRVRQIFQRVDLGGASVVDEPDYRFRFFTSVIVPSITKSTGYEDGILLYIPDYADFIRVRNYLKDKTTILFGDINEYSDVRQLTSTRSLFQQGRIKVLLYTERLHHFRRYEIKGVKSVIFYQPPSNPEFYNEVVRYIGKSAFLGDTDLNISTVRCVYSKLDGLALERIVSSKRAAVLTHGQNEIYEFK</sequence>
<gene>
    <name type="primary">UTP25</name>
    <name type="ordered locus">ZYRO0A02002g</name>
</gene>
<evidence type="ECO:0000250" key="1"/>
<evidence type="ECO:0000256" key="2">
    <source>
        <dbReference type="SAM" id="MobiDB-lite"/>
    </source>
</evidence>
<evidence type="ECO:0000305" key="3"/>
<accession>C5DPB7</accession>
<reference key="1">
    <citation type="journal article" date="2009" name="Genome Res.">
        <title>Comparative genomics of protoploid Saccharomycetaceae.</title>
        <authorList>
            <consortium name="The Genolevures Consortium"/>
            <person name="Souciet J.-L."/>
            <person name="Dujon B."/>
            <person name="Gaillardin C."/>
            <person name="Johnston M."/>
            <person name="Baret P.V."/>
            <person name="Cliften P."/>
            <person name="Sherman D.J."/>
            <person name="Weissenbach J."/>
            <person name="Westhof E."/>
            <person name="Wincker P."/>
            <person name="Jubin C."/>
            <person name="Poulain J."/>
            <person name="Barbe V."/>
            <person name="Segurens B."/>
            <person name="Artiguenave F."/>
            <person name="Anthouard V."/>
            <person name="Vacherie B."/>
            <person name="Val M.-E."/>
            <person name="Fulton R.S."/>
            <person name="Minx P."/>
            <person name="Wilson R."/>
            <person name="Durrens P."/>
            <person name="Jean G."/>
            <person name="Marck C."/>
            <person name="Martin T."/>
            <person name="Nikolski M."/>
            <person name="Rolland T."/>
            <person name="Seret M.-L."/>
            <person name="Casaregola S."/>
            <person name="Despons L."/>
            <person name="Fairhead C."/>
            <person name="Fischer G."/>
            <person name="Lafontaine I."/>
            <person name="Leh V."/>
            <person name="Lemaire M."/>
            <person name="de Montigny J."/>
            <person name="Neuveglise C."/>
            <person name="Thierry A."/>
            <person name="Blanc-Lenfle I."/>
            <person name="Bleykasten C."/>
            <person name="Diffels J."/>
            <person name="Fritsch E."/>
            <person name="Frangeul L."/>
            <person name="Goeffon A."/>
            <person name="Jauniaux N."/>
            <person name="Kachouri-Lafond R."/>
            <person name="Payen C."/>
            <person name="Potier S."/>
            <person name="Pribylova L."/>
            <person name="Ozanne C."/>
            <person name="Richard G.-F."/>
            <person name="Sacerdot C."/>
            <person name="Straub M.-L."/>
            <person name="Talla E."/>
        </authorList>
    </citation>
    <scope>NUCLEOTIDE SEQUENCE [LARGE SCALE GENOMIC DNA]</scope>
    <source>
        <strain>ATCC 2623 / CBS 732 / BCRC 21506 / NBRC 1130 / NCYC 568 / NRRL Y-229</strain>
    </source>
</reference>
<dbReference type="EMBL" id="CU928173">
    <property type="protein sequence ID" value="CAR25528.1"/>
    <property type="molecule type" value="Genomic_DNA"/>
</dbReference>
<dbReference type="RefSeq" id="XP_002494461.1">
    <property type="nucleotide sequence ID" value="XM_002494416.1"/>
</dbReference>
<dbReference type="FunCoup" id="C5DPB7">
    <property type="interactions" value="1326"/>
</dbReference>
<dbReference type="STRING" id="559307.C5DPB7"/>
<dbReference type="GeneID" id="8201590"/>
<dbReference type="KEGG" id="zro:ZYRO0A02002g"/>
<dbReference type="HOGENOM" id="CLU_018705_0_1_1"/>
<dbReference type="InParanoid" id="C5DPB7"/>
<dbReference type="Proteomes" id="UP000008536">
    <property type="component" value="Chromosome A"/>
</dbReference>
<dbReference type="GO" id="GO:0005730">
    <property type="term" value="C:nucleolus"/>
    <property type="evidence" value="ECO:0007669"/>
    <property type="project" value="UniProtKB-SubCell"/>
</dbReference>
<dbReference type="GO" id="GO:0032040">
    <property type="term" value="C:small-subunit processome"/>
    <property type="evidence" value="ECO:0007669"/>
    <property type="project" value="TreeGrafter"/>
</dbReference>
<dbReference type="GO" id="GO:0019843">
    <property type="term" value="F:rRNA binding"/>
    <property type="evidence" value="ECO:0007669"/>
    <property type="project" value="TreeGrafter"/>
</dbReference>
<dbReference type="GO" id="GO:0034511">
    <property type="term" value="F:U3 snoRNA binding"/>
    <property type="evidence" value="ECO:0007669"/>
    <property type="project" value="InterPro"/>
</dbReference>
<dbReference type="GO" id="GO:0000462">
    <property type="term" value="P:maturation of SSU-rRNA from tricistronic rRNA transcript (SSU-rRNA, 5.8S rRNA, LSU-rRNA)"/>
    <property type="evidence" value="ECO:0007669"/>
    <property type="project" value="TreeGrafter"/>
</dbReference>
<dbReference type="Gene3D" id="3.40.50.300">
    <property type="entry name" value="P-loop containing nucleotide triphosphate hydrolases"/>
    <property type="match status" value="1"/>
</dbReference>
<dbReference type="InterPro" id="IPR027417">
    <property type="entry name" value="P-loop_NTPase"/>
</dbReference>
<dbReference type="InterPro" id="IPR010678">
    <property type="entry name" value="UTP25"/>
</dbReference>
<dbReference type="InterPro" id="IPR053939">
    <property type="entry name" value="UTP25_C"/>
</dbReference>
<dbReference type="InterPro" id="IPR053940">
    <property type="entry name" value="UTP25_NTPase-like"/>
</dbReference>
<dbReference type="PANTHER" id="PTHR12933">
    <property type="entry name" value="ORF PROTEIN-RELATED"/>
    <property type="match status" value="1"/>
</dbReference>
<dbReference type="PANTHER" id="PTHR12933:SF0">
    <property type="entry name" value="U3 SMALL NUCLEOLAR RNA-ASSOCIATED PROTEIN 25 HOMOLOG"/>
    <property type="match status" value="1"/>
</dbReference>
<dbReference type="Pfam" id="PF06862">
    <property type="entry name" value="Utp25_C"/>
    <property type="match status" value="1"/>
</dbReference>
<dbReference type="Pfam" id="PF22916">
    <property type="entry name" value="UTP25_NTPase-like"/>
    <property type="match status" value="1"/>
</dbReference>
<proteinExistence type="inferred from homology"/>
<keyword id="KW-0539">Nucleus</keyword>
<keyword id="KW-1185">Reference proteome</keyword>
<keyword id="KW-0687">Ribonucleoprotein</keyword>
<keyword id="KW-0690">Ribosome biogenesis</keyword>
<keyword id="KW-0698">rRNA processing</keyword>
<feature type="chain" id="PRO_0000408150" description="U3 small nucleolar RNA-associated protein 25">
    <location>
        <begin position="1"/>
        <end position="709"/>
    </location>
</feature>
<feature type="region of interest" description="Disordered" evidence="2">
    <location>
        <begin position="1"/>
        <end position="156"/>
    </location>
</feature>
<feature type="compositionally biased region" description="Basic and acidic residues" evidence="2">
    <location>
        <begin position="22"/>
        <end position="36"/>
    </location>
</feature>
<feature type="compositionally biased region" description="Acidic residues" evidence="2">
    <location>
        <begin position="37"/>
        <end position="66"/>
    </location>
</feature>
<feature type="compositionally biased region" description="Basic and acidic residues" evidence="2">
    <location>
        <begin position="82"/>
        <end position="91"/>
    </location>
</feature>
<feature type="compositionally biased region" description="Acidic residues" evidence="2">
    <location>
        <begin position="105"/>
        <end position="116"/>
    </location>
</feature>
<feature type="compositionally biased region" description="Acidic residues" evidence="2">
    <location>
        <begin position="126"/>
        <end position="150"/>
    </location>
</feature>
<organism>
    <name type="scientific">Zygosaccharomyces rouxii (strain ATCC 2623 / CBS 732 / NBRC 1130 / NCYC 568 / NRRL Y-229)</name>
    <dbReference type="NCBI Taxonomy" id="559307"/>
    <lineage>
        <taxon>Eukaryota</taxon>
        <taxon>Fungi</taxon>
        <taxon>Dikarya</taxon>
        <taxon>Ascomycota</taxon>
        <taxon>Saccharomycotina</taxon>
        <taxon>Saccharomycetes</taxon>
        <taxon>Saccharomycetales</taxon>
        <taxon>Saccharomycetaceae</taxon>
        <taxon>Zygosaccharomyces</taxon>
    </lineage>
</organism>
<name>UTP25_ZYGRC</name>
<comment type="function">
    <text evidence="1">DEAD-box RNA helicase-like protein required for pre-18S rRNA processing, specifically at sites A0, A1, and A2.</text>
</comment>
<comment type="subunit">
    <text evidence="1">Component of the ribosomal small subunit (SSU) processome composed of at least 40 protein subunits and snoRNA U3.</text>
</comment>
<comment type="subcellular location">
    <subcellularLocation>
        <location evidence="1">Nucleus</location>
        <location evidence="1">Nucleolus</location>
    </subcellularLocation>
</comment>
<comment type="similarity">
    <text evidence="3">Belongs to the UTP25 family.</text>
</comment>
<protein>
    <recommendedName>
        <fullName>U3 small nucleolar RNA-associated protein 25</fullName>
        <shortName>U3 snoRNA-associated protein 25</shortName>
    </recommendedName>
    <alternativeName>
        <fullName>U three protein 25</fullName>
    </alternativeName>
</protein>